<organism>
    <name type="scientific">Danio rerio</name>
    <name type="common">Zebrafish</name>
    <name type="synonym">Brachydanio rerio</name>
    <dbReference type="NCBI Taxonomy" id="7955"/>
    <lineage>
        <taxon>Eukaryota</taxon>
        <taxon>Metazoa</taxon>
        <taxon>Chordata</taxon>
        <taxon>Craniata</taxon>
        <taxon>Vertebrata</taxon>
        <taxon>Euteleostomi</taxon>
        <taxon>Actinopterygii</taxon>
        <taxon>Neopterygii</taxon>
        <taxon>Teleostei</taxon>
        <taxon>Ostariophysi</taxon>
        <taxon>Cypriniformes</taxon>
        <taxon>Danionidae</taxon>
        <taxon>Danioninae</taxon>
        <taxon>Danio</taxon>
    </lineage>
</organism>
<sequence length="278" mass="32383">MEFSGTHQAFRNRWAKTDDEMCKHSMSFHLHKTLRKEFFASYLYLLEQIPLVKLYALTCEYIKGEKQFYYRAQNFYKDVPPSEEGMMGDFVEISDIDLEGSRQFLKKFVGPGKAGTKCALDCGCGIGRVSKGVLFPVFESMEMLDMMEEFILHAHECYLGDYADRVESYYLYNLQEFIPPRKKYDVIWMQWVACHLTDKDLMEFLMRAKESLRPNGVIIIKDNMARQGCKLDPIDSSIIRHLDIMNGIIQRAGLNILDVEKQEGFPEAIVPVWMIAMR</sequence>
<reference key="1">
    <citation type="journal article" date="2013" name="Nature">
        <title>The zebrafish reference genome sequence and its relationship to the human genome.</title>
        <authorList>
            <person name="Howe K."/>
            <person name="Clark M.D."/>
            <person name="Torroja C.F."/>
            <person name="Torrance J."/>
            <person name="Berthelot C."/>
            <person name="Muffato M."/>
            <person name="Collins J.E."/>
            <person name="Humphray S."/>
            <person name="McLaren K."/>
            <person name="Matthews L."/>
            <person name="McLaren S."/>
            <person name="Sealy I."/>
            <person name="Caccamo M."/>
            <person name="Churcher C."/>
            <person name="Scott C."/>
            <person name="Barrett J.C."/>
            <person name="Koch R."/>
            <person name="Rauch G.J."/>
            <person name="White S."/>
            <person name="Chow W."/>
            <person name="Kilian B."/>
            <person name="Quintais L.T."/>
            <person name="Guerra-Assuncao J.A."/>
            <person name="Zhou Y."/>
            <person name="Gu Y."/>
            <person name="Yen J."/>
            <person name="Vogel J.H."/>
            <person name="Eyre T."/>
            <person name="Redmond S."/>
            <person name="Banerjee R."/>
            <person name="Chi J."/>
            <person name="Fu B."/>
            <person name="Langley E."/>
            <person name="Maguire S.F."/>
            <person name="Laird G.K."/>
            <person name="Lloyd D."/>
            <person name="Kenyon E."/>
            <person name="Donaldson S."/>
            <person name="Sehra H."/>
            <person name="Almeida-King J."/>
            <person name="Loveland J."/>
            <person name="Trevanion S."/>
            <person name="Jones M."/>
            <person name="Quail M."/>
            <person name="Willey D."/>
            <person name="Hunt A."/>
            <person name="Burton J."/>
            <person name="Sims S."/>
            <person name="McLay K."/>
            <person name="Plumb B."/>
            <person name="Davis J."/>
            <person name="Clee C."/>
            <person name="Oliver K."/>
            <person name="Clark R."/>
            <person name="Riddle C."/>
            <person name="Elliot D."/>
            <person name="Threadgold G."/>
            <person name="Harden G."/>
            <person name="Ware D."/>
            <person name="Begum S."/>
            <person name="Mortimore B."/>
            <person name="Kerry G."/>
            <person name="Heath P."/>
            <person name="Phillimore B."/>
            <person name="Tracey A."/>
            <person name="Corby N."/>
            <person name="Dunn M."/>
            <person name="Johnson C."/>
            <person name="Wood J."/>
            <person name="Clark S."/>
            <person name="Pelan S."/>
            <person name="Griffiths G."/>
            <person name="Smith M."/>
            <person name="Glithero R."/>
            <person name="Howden P."/>
            <person name="Barker N."/>
            <person name="Lloyd C."/>
            <person name="Stevens C."/>
            <person name="Harley J."/>
            <person name="Holt K."/>
            <person name="Panagiotidis G."/>
            <person name="Lovell J."/>
            <person name="Beasley H."/>
            <person name="Henderson C."/>
            <person name="Gordon D."/>
            <person name="Auger K."/>
            <person name="Wright D."/>
            <person name="Collins J."/>
            <person name="Raisen C."/>
            <person name="Dyer L."/>
            <person name="Leung K."/>
            <person name="Robertson L."/>
            <person name="Ambridge K."/>
            <person name="Leongamornlert D."/>
            <person name="McGuire S."/>
            <person name="Gilderthorp R."/>
            <person name="Griffiths C."/>
            <person name="Manthravadi D."/>
            <person name="Nichol S."/>
            <person name="Barker G."/>
            <person name="Whitehead S."/>
            <person name="Kay M."/>
            <person name="Brown J."/>
            <person name="Murnane C."/>
            <person name="Gray E."/>
            <person name="Humphries M."/>
            <person name="Sycamore N."/>
            <person name="Barker D."/>
            <person name="Saunders D."/>
            <person name="Wallis J."/>
            <person name="Babbage A."/>
            <person name="Hammond S."/>
            <person name="Mashreghi-Mohammadi M."/>
            <person name="Barr L."/>
            <person name="Martin S."/>
            <person name="Wray P."/>
            <person name="Ellington A."/>
            <person name="Matthews N."/>
            <person name="Ellwood M."/>
            <person name="Woodmansey R."/>
            <person name="Clark G."/>
            <person name="Cooper J."/>
            <person name="Tromans A."/>
            <person name="Grafham D."/>
            <person name="Skuce C."/>
            <person name="Pandian R."/>
            <person name="Andrews R."/>
            <person name="Harrison E."/>
            <person name="Kimberley A."/>
            <person name="Garnett J."/>
            <person name="Fosker N."/>
            <person name="Hall R."/>
            <person name="Garner P."/>
            <person name="Kelly D."/>
            <person name="Bird C."/>
            <person name="Palmer S."/>
            <person name="Gehring I."/>
            <person name="Berger A."/>
            <person name="Dooley C.M."/>
            <person name="Ersan-Urun Z."/>
            <person name="Eser C."/>
            <person name="Geiger H."/>
            <person name="Geisler M."/>
            <person name="Karotki L."/>
            <person name="Kirn A."/>
            <person name="Konantz J."/>
            <person name="Konantz M."/>
            <person name="Oberlander M."/>
            <person name="Rudolph-Geiger S."/>
            <person name="Teucke M."/>
            <person name="Lanz C."/>
            <person name="Raddatz G."/>
            <person name="Osoegawa K."/>
            <person name="Zhu B."/>
            <person name="Rapp A."/>
            <person name="Widaa S."/>
            <person name="Langford C."/>
            <person name="Yang F."/>
            <person name="Schuster S.C."/>
            <person name="Carter N.P."/>
            <person name="Harrow J."/>
            <person name="Ning Z."/>
            <person name="Herrero J."/>
            <person name="Searle S.M."/>
            <person name="Enright A."/>
            <person name="Geisler R."/>
            <person name="Plasterk R.H."/>
            <person name="Lee C."/>
            <person name="Westerfield M."/>
            <person name="de Jong P.J."/>
            <person name="Zon L.I."/>
            <person name="Postlethwait J.H."/>
            <person name="Nusslein-Volhard C."/>
            <person name="Hubbard T.J."/>
            <person name="Roest Crollius H."/>
            <person name="Rogers J."/>
            <person name="Stemple D.L."/>
        </authorList>
    </citation>
    <scope>NUCLEOTIDE SEQUENCE [LARGE SCALE GENOMIC DNA]</scope>
    <source>
        <strain>Tuebingen</strain>
    </source>
</reference>
<comment type="function">
    <text evidence="1">Alpha N-methyltransferase that methylates the N-terminus of target proteins containing the N-terminal motif [Ala/Pro/Ser]-Pro-Lys when the initiator Met is cleaved. Specifically catalyzes monomethylation of exposed alpha-amino group of Ala or Ser residue in the [Ala/Ser]-Pro-Lys motif and Pro in the Pro-Pro-Lys motif. Predominantly functions as a mono-methyltransferase but is also able to di-/tri-methylate the GPKRIA peptide and di-methylate the PPKRIA peptide (in vitro). May activate NTMT1 by priming its substrates for trimethylation.</text>
</comment>
<comment type="catalytic activity">
    <reaction evidence="1">
        <text>N-terminal L-alanyl-L-prolyl-L-lysyl-[protein] + S-adenosyl-L-methionine = N-terminal N-methyl-L-alanyl-L-prolyl-L-lysyl-[protein] + S-adenosyl-L-homocysteine + H(+)</text>
        <dbReference type="Rhea" id="RHEA:54096"/>
        <dbReference type="Rhea" id="RHEA-COMP:13785"/>
        <dbReference type="Rhea" id="RHEA-COMP:13786"/>
        <dbReference type="ChEBI" id="CHEBI:15378"/>
        <dbReference type="ChEBI" id="CHEBI:57856"/>
        <dbReference type="ChEBI" id="CHEBI:59789"/>
        <dbReference type="ChEBI" id="CHEBI:138057"/>
        <dbReference type="ChEBI" id="CHEBI:138058"/>
        <dbReference type="EC" id="2.1.1.299"/>
    </reaction>
    <physiologicalReaction direction="left-to-right" evidence="1">
        <dbReference type="Rhea" id="RHEA:54097"/>
    </physiologicalReaction>
</comment>
<comment type="catalytic activity">
    <reaction evidence="1">
        <text>N-terminal L-prolyl-L-prolyl-L-lysyl-[protein] + S-adenosyl-L-methionine = N-terminal N-methyl-L-prolyl-L-prolyl-L-lysyl-[protein] + S-adenosyl-L-homocysteine + H(+)</text>
        <dbReference type="Rhea" id="RHEA:54100"/>
        <dbReference type="Rhea" id="RHEA-COMP:13787"/>
        <dbReference type="Rhea" id="RHEA-COMP:13788"/>
        <dbReference type="ChEBI" id="CHEBI:15378"/>
        <dbReference type="ChEBI" id="CHEBI:57856"/>
        <dbReference type="ChEBI" id="CHEBI:59789"/>
        <dbReference type="ChEBI" id="CHEBI:138059"/>
        <dbReference type="ChEBI" id="CHEBI:138060"/>
        <dbReference type="EC" id="2.1.1.299"/>
    </reaction>
    <physiologicalReaction direction="left-to-right" evidence="1">
        <dbReference type="Rhea" id="RHEA:54101"/>
    </physiologicalReaction>
</comment>
<comment type="catalytic activity">
    <reaction evidence="1">
        <text>N-terminal L-seryl-L-prolyl-L-lysyl-[protein] + S-adenosyl-L-methionine = N-terminal N-methyl-L-seryl-L-prolyl-L-lysyl-[protein] + S-adenosyl-L-homocysteine + H(+)</text>
        <dbReference type="Rhea" id="RHEA:54104"/>
        <dbReference type="Rhea" id="RHEA-COMP:13789"/>
        <dbReference type="Rhea" id="RHEA-COMP:13790"/>
        <dbReference type="ChEBI" id="CHEBI:15378"/>
        <dbReference type="ChEBI" id="CHEBI:57856"/>
        <dbReference type="ChEBI" id="CHEBI:59789"/>
        <dbReference type="ChEBI" id="CHEBI:138061"/>
        <dbReference type="ChEBI" id="CHEBI:138062"/>
        <dbReference type="EC" id="2.1.1.299"/>
    </reaction>
    <physiologicalReaction direction="left-to-right" evidence="1">
        <dbReference type="Rhea" id="RHEA:54105"/>
    </physiologicalReaction>
</comment>
<comment type="subcellular location">
    <subcellularLocation>
        <location evidence="1">Nucleus</location>
    </subcellularLocation>
</comment>
<comment type="similarity">
    <text evidence="2">Belongs to the methyltransferase superfamily. NTM1 family.</text>
</comment>
<comment type="sequence caution" evidence="2">
    <conflict type="erroneous initiation">
        <sequence resource="EMBL-CDS" id="CAX14472"/>
    </conflict>
    <text>Extended N-terminus.</text>
</comment>
<keyword id="KW-0489">Methyltransferase</keyword>
<keyword id="KW-0539">Nucleus</keyword>
<keyword id="KW-1185">Reference proteome</keyword>
<keyword id="KW-0949">S-adenosyl-L-methionine</keyword>
<keyword id="KW-0808">Transferase</keyword>
<dbReference type="EC" id="2.1.1.299" evidence="1"/>
<dbReference type="EMBL" id="CU571309">
    <property type="protein sequence ID" value="CAX14472.1"/>
    <property type="status" value="ALT_INIT"/>
    <property type="molecule type" value="Genomic_DNA"/>
</dbReference>
<dbReference type="SMR" id="B8JM82"/>
<dbReference type="FunCoup" id="B8JM82">
    <property type="interactions" value="1474"/>
</dbReference>
<dbReference type="STRING" id="7955.ENSDARP00000120895"/>
<dbReference type="PaxDb" id="7955-ENSDARP00000120895"/>
<dbReference type="AGR" id="ZFIN:ZDB-GENE-081104-175"/>
<dbReference type="ZFIN" id="ZDB-GENE-081104-175">
    <property type="gene designation" value="ntmt2"/>
</dbReference>
<dbReference type="eggNOG" id="KOG3178">
    <property type="taxonomic scope" value="Eukaryota"/>
</dbReference>
<dbReference type="InParanoid" id="B8JM82"/>
<dbReference type="PhylomeDB" id="B8JM82"/>
<dbReference type="TreeFam" id="TF314174"/>
<dbReference type="PRO" id="PR:B8JM82"/>
<dbReference type="Proteomes" id="UP000000437">
    <property type="component" value="Unplaced"/>
</dbReference>
<dbReference type="GO" id="GO:0005737">
    <property type="term" value="C:cytoplasm"/>
    <property type="evidence" value="ECO:0000318"/>
    <property type="project" value="GO_Central"/>
</dbReference>
<dbReference type="GO" id="GO:0005634">
    <property type="term" value="C:nucleus"/>
    <property type="evidence" value="ECO:0000250"/>
    <property type="project" value="UniProtKB"/>
</dbReference>
<dbReference type="GO" id="GO:0071885">
    <property type="term" value="F:N-terminal protein N-methyltransferase activity"/>
    <property type="evidence" value="ECO:0000250"/>
    <property type="project" value="UniProtKB"/>
</dbReference>
<dbReference type="GO" id="GO:0006480">
    <property type="term" value="P:N-terminal protein amino acid methylation"/>
    <property type="evidence" value="ECO:0000250"/>
    <property type="project" value="UniProtKB"/>
</dbReference>
<dbReference type="CDD" id="cd02440">
    <property type="entry name" value="AdoMet_MTases"/>
    <property type="match status" value="1"/>
</dbReference>
<dbReference type="FunFam" id="3.40.50.150:FF:000025">
    <property type="entry name" value="N-terminal Xaa-Pro-Lys N-methyltransferase 1"/>
    <property type="match status" value="1"/>
</dbReference>
<dbReference type="Gene3D" id="3.40.50.150">
    <property type="entry name" value="Vaccinia Virus protein VP39"/>
    <property type="match status" value="1"/>
</dbReference>
<dbReference type="InterPro" id="IPR008576">
    <property type="entry name" value="MeTrfase_NTM1"/>
</dbReference>
<dbReference type="InterPro" id="IPR029063">
    <property type="entry name" value="SAM-dependent_MTases_sf"/>
</dbReference>
<dbReference type="PANTHER" id="PTHR12753">
    <property type="entry name" value="AD-003 - RELATED"/>
    <property type="match status" value="1"/>
</dbReference>
<dbReference type="PANTHER" id="PTHR12753:SF2">
    <property type="entry name" value="N-TERMINAL XAA-PRO-LYS N-METHYLTRANSFERASE 2"/>
    <property type="match status" value="1"/>
</dbReference>
<dbReference type="Pfam" id="PF05891">
    <property type="entry name" value="Methyltransf_PK"/>
    <property type="match status" value="1"/>
</dbReference>
<dbReference type="SUPFAM" id="SSF53335">
    <property type="entry name" value="S-adenosyl-L-methionine-dependent methyltransferases"/>
    <property type="match status" value="1"/>
</dbReference>
<gene>
    <name type="primary">ntmt2</name>
    <name type="synonym">mettl11b</name>
    <name type="ORF">si:ch211-214d2.2</name>
</gene>
<accession>B8JM82</accession>
<feature type="chain" id="PRO_0000399781" description="N-terminal Xaa-Pro-Lys N-methyltransferase 2">
    <location>
        <begin position="1"/>
        <end position="278"/>
    </location>
</feature>
<feature type="binding site" evidence="1">
    <location>
        <position position="123"/>
    </location>
    <ligand>
        <name>S-adenosyl-L-methionine</name>
        <dbReference type="ChEBI" id="CHEBI:59789"/>
    </ligand>
</feature>
<feature type="binding site" evidence="1">
    <location>
        <position position="128"/>
    </location>
    <ligand>
        <name>S-adenosyl-L-methionine</name>
        <dbReference type="ChEBI" id="CHEBI:59789"/>
    </ligand>
</feature>
<feature type="binding site" evidence="1">
    <location>
        <position position="145"/>
    </location>
    <ligand>
        <name>S-adenosyl-L-methionine</name>
        <dbReference type="ChEBI" id="CHEBI:59789"/>
    </ligand>
</feature>
<feature type="binding site" evidence="1">
    <location>
        <begin position="174"/>
        <end position="175"/>
    </location>
    <ligand>
        <name>S-adenosyl-L-methionine</name>
        <dbReference type="ChEBI" id="CHEBI:59789"/>
    </ligand>
</feature>
<feature type="binding site" evidence="1">
    <location>
        <position position="190"/>
    </location>
    <ligand>
        <name>S-adenosyl-L-methionine</name>
        <dbReference type="ChEBI" id="CHEBI:59789"/>
    </ligand>
</feature>
<feature type="binding site" evidence="1">
    <location>
        <position position="195"/>
    </location>
    <ligand>
        <name>S-adenosyl-L-methionine</name>
        <dbReference type="ChEBI" id="CHEBI:59789"/>
    </ligand>
</feature>
<proteinExistence type="inferred from homology"/>
<name>NTM1B_DANRE</name>
<evidence type="ECO:0000250" key="1">
    <source>
        <dbReference type="UniProtKB" id="Q5VVY1"/>
    </source>
</evidence>
<evidence type="ECO:0000305" key="2"/>
<protein>
    <recommendedName>
        <fullName>N-terminal Xaa-Pro-Lys N-methyltransferase 2</fullName>
        <ecNumber evidence="1">2.1.1.299</ecNumber>
    </recommendedName>
    <alternativeName>
        <fullName>Alpha N-terminal protein methyltransferase 1B</fullName>
    </alternativeName>
    <alternativeName>
        <fullName>Methyltransferase-like protein 11B</fullName>
    </alternativeName>
    <alternativeName>
        <fullName>X-Pro-Lys N-terminal protein methyltransferase 1B</fullName>
        <shortName>NTM1B</shortName>
    </alternativeName>
</protein>